<accession>P57553</accession>
<accession>Q9F453</accession>
<feature type="chain" id="PRO_0000105494" description="DNA polymerase III subunit gamma">
    <location>
        <begin position="1"/>
        <end position="361"/>
    </location>
</feature>
<feature type="binding site" evidence="3">
    <location>
        <begin position="45"/>
        <end position="52"/>
    </location>
    <ligand>
        <name>ATP</name>
        <dbReference type="ChEBI" id="CHEBI:30616"/>
    </ligand>
</feature>
<feature type="binding site" evidence="2">
    <location>
        <position position="64"/>
    </location>
    <ligand>
        <name>Zn(2+)</name>
        <dbReference type="ChEBI" id="CHEBI:29105"/>
    </ligand>
</feature>
<feature type="binding site" evidence="2">
    <location>
        <position position="73"/>
    </location>
    <ligand>
        <name>Zn(2+)</name>
        <dbReference type="ChEBI" id="CHEBI:29105"/>
    </ligand>
</feature>
<feature type="binding site" evidence="2">
    <location>
        <position position="76"/>
    </location>
    <ligand>
        <name>Zn(2+)</name>
        <dbReference type="ChEBI" id="CHEBI:29105"/>
    </ligand>
</feature>
<feature type="binding site" evidence="2">
    <location>
        <position position="79"/>
    </location>
    <ligand>
        <name>Zn(2+)</name>
        <dbReference type="ChEBI" id="CHEBI:29105"/>
    </ligand>
</feature>
<sequence>MNYQILARKWRPQYFRDIIGQKHIVTAISNGLSLGRIHHAWLLSGTRGIGKTTIARLLAKSLNCQNGITSDPCRQCIICKEIEKGLCLDVIEIDGASRTKVEEMREILDSIYYSPIKSRFKVYLIDEVHMLSRHSFNALLKTLEEPPEHVKFVLATTDVDRIPKTIISRCLYFKLQIISEEKIFKFLKYILIKESIDTDEYSLKKIAYHAHGSIRDALNLLEHAINLGNGHVNIKNVTDMLGLLPEKYSFLLTDAVLKKDSKKTMLLLNKISSIGVEWEEILIEMLRFLYHISTSQSFPLVWEKIFTEKYKNQIQKIAQNNKKTNIQLCYQILLNGRKELKFAPSQKIGVEMSLLRVISAI</sequence>
<comment type="function">
    <text>DNA polymerase III is a complex, multichain enzyme responsible for most of the replicative synthesis in bacteria. This DNA polymerase also exhibits 3' to 5' exonuclease activity.</text>
</comment>
<comment type="catalytic activity">
    <reaction>
        <text>DNA(n) + a 2'-deoxyribonucleoside 5'-triphosphate = DNA(n+1) + diphosphate</text>
        <dbReference type="Rhea" id="RHEA:22508"/>
        <dbReference type="Rhea" id="RHEA-COMP:17339"/>
        <dbReference type="Rhea" id="RHEA-COMP:17340"/>
        <dbReference type="ChEBI" id="CHEBI:33019"/>
        <dbReference type="ChEBI" id="CHEBI:61560"/>
        <dbReference type="ChEBI" id="CHEBI:173112"/>
        <dbReference type="EC" id="2.7.7.7"/>
    </reaction>
</comment>
<comment type="subunit">
    <text evidence="1">DNA polymerase III contains a core (composed of alpha, epsilon and theta chains) that associates with a tau subunit. This core dimerizes to form the POLIII' complex. PolIII' associates with the gamma complex (composed of gamma, delta, delta', psi and chi chains) and with the beta chain to form the complete DNA polymerase III complex (By similarity).</text>
</comment>
<comment type="similarity">
    <text evidence="4">Belongs to the DnaX/STICHEL family.</text>
</comment>
<dbReference type="EC" id="2.7.7.7"/>
<dbReference type="EMBL" id="BA000003">
    <property type="protein sequence ID" value="BAB13178.1"/>
    <property type="molecule type" value="Genomic_DNA"/>
</dbReference>
<dbReference type="RefSeq" id="NP_240292.1">
    <property type="nucleotide sequence ID" value="NC_002528.1"/>
</dbReference>
<dbReference type="RefSeq" id="WP_009874434.1">
    <property type="nucleotide sequence ID" value="NZ_AP036055.1"/>
</dbReference>
<dbReference type="SMR" id="P57553"/>
<dbReference type="STRING" id="563178.BUAP5A_474"/>
<dbReference type="EnsemblBacteria" id="BAB13178">
    <property type="protein sequence ID" value="BAB13178"/>
    <property type="gene ID" value="BAB13178"/>
</dbReference>
<dbReference type="KEGG" id="buc:BU481"/>
<dbReference type="PATRIC" id="fig|107806.10.peg.490"/>
<dbReference type="eggNOG" id="COG2812">
    <property type="taxonomic scope" value="Bacteria"/>
</dbReference>
<dbReference type="HOGENOM" id="CLU_006229_0_1_6"/>
<dbReference type="Proteomes" id="UP000001806">
    <property type="component" value="Chromosome"/>
</dbReference>
<dbReference type="GO" id="GO:0009360">
    <property type="term" value="C:DNA polymerase III complex"/>
    <property type="evidence" value="ECO:0007669"/>
    <property type="project" value="InterPro"/>
</dbReference>
<dbReference type="GO" id="GO:0005524">
    <property type="term" value="F:ATP binding"/>
    <property type="evidence" value="ECO:0007669"/>
    <property type="project" value="UniProtKB-KW"/>
</dbReference>
<dbReference type="GO" id="GO:0016887">
    <property type="term" value="F:ATP hydrolysis activity"/>
    <property type="evidence" value="ECO:0007669"/>
    <property type="project" value="InterPro"/>
</dbReference>
<dbReference type="GO" id="GO:0003677">
    <property type="term" value="F:DNA binding"/>
    <property type="evidence" value="ECO:0007669"/>
    <property type="project" value="InterPro"/>
</dbReference>
<dbReference type="GO" id="GO:0003887">
    <property type="term" value="F:DNA-directed DNA polymerase activity"/>
    <property type="evidence" value="ECO:0007669"/>
    <property type="project" value="UniProtKB-KW"/>
</dbReference>
<dbReference type="GO" id="GO:0046872">
    <property type="term" value="F:metal ion binding"/>
    <property type="evidence" value="ECO:0007669"/>
    <property type="project" value="UniProtKB-KW"/>
</dbReference>
<dbReference type="GO" id="GO:0006261">
    <property type="term" value="P:DNA-templated DNA replication"/>
    <property type="evidence" value="ECO:0007669"/>
    <property type="project" value="TreeGrafter"/>
</dbReference>
<dbReference type="CDD" id="cd00009">
    <property type="entry name" value="AAA"/>
    <property type="match status" value="1"/>
</dbReference>
<dbReference type="CDD" id="cd18137">
    <property type="entry name" value="HLD_clamp_pol_III_gamma_tau"/>
    <property type="match status" value="1"/>
</dbReference>
<dbReference type="FunFam" id="3.40.50.300:FF:000014">
    <property type="entry name" value="DNA polymerase III subunit gamma/tau"/>
    <property type="match status" value="1"/>
</dbReference>
<dbReference type="Gene3D" id="1.10.8.60">
    <property type="match status" value="1"/>
</dbReference>
<dbReference type="Gene3D" id="1.20.272.10">
    <property type="match status" value="1"/>
</dbReference>
<dbReference type="Gene3D" id="3.40.50.300">
    <property type="entry name" value="P-loop containing nucleotide triphosphate hydrolases"/>
    <property type="match status" value="1"/>
</dbReference>
<dbReference type="InterPro" id="IPR003593">
    <property type="entry name" value="AAA+_ATPase"/>
</dbReference>
<dbReference type="InterPro" id="IPR008921">
    <property type="entry name" value="DNA_pol3_clamp-load_cplx_C"/>
</dbReference>
<dbReference type="InterPro" id="IPR022754">
    <property type="entry name" value="DNA_pol_III_gamma-3"/>
</dbReference>
<dbReference type="InterPro" id="IPR012763">
    <property type="entry name" value="DNA_pol_III_sug/sutau_N"/>
</dbReference>
<dbReference type="InterPro" id="IPR050238">
    <property type="entry name" value="DNA_Rep/Repair_Clamp_Loader"/>
</dbReference>
<dbReference type="InterPro" id="IPR045085">
    <property type="entry name" value="HLD_clamp_pol_III_gamma_tau"/>
</dbReference>
<dbReference type="InterPro" id="IPR027417">
    <property type="entry name" value="P-loop_NTPase"/>
</dbReference>
<dbReference type="NCBIfam" id="TIGR02397">
    <property type="entry name" value="dnaX_nterm"/>
    <property type="match status" value="1"/>
</dbReference>
<dbReference type="NCBIfam" id="NF011522">
    <property type="entry name" value="PRK14961.1"/>
    <property type="match status" value="1"/>
</dbReference>
<dbReference type="PANTHER" id="PTHR11669:SF0">
    <property type="entry name" value="PROTEIN STICHEL-LIKE 2"/>
    <property type="match status" value="1"/>
</dbReference>
<dbReference type="PANTHER" id="PTHR11669">
    <property type="entry name" value="REPLICATION FACTOR C / DNA POLYMERASE III GAMMA-TAU SUBUNIT"/>
    <property type="match status" value="1"/>
</dbReference>
<dbReference type="Pfam" id="PF13177">
    <property type="entry name" value="DNA_pol3_delta2"/>
    <property type="match status" value="1"/>
</dbReference>
<dbReference type="Pfam" id="PF12169">
    <property type="entry name" value="DNA_pol3_gamma3"/>
    <property type="match status" value="1"/>
</dbReference>
<dbReference type="Pfam" id="PF22608">
    <property type="entry name" value="DNAX_ATPase_lid"/>
    <property type="match status" value="1"/>
</dbReference>
<dbReference type="SMART" id="SM00382">
    <property type="entry name" value="AAA"/>
    <property type="match status" value="1"/>
</dbReference>
<dbReference type="SUPFAM" id="SSF52540">
    <property type="entry name" value="P-loop containing nucleoside triphosphate hydrolases"/>
    <property type="match status" value="1"/>
</dbReference>
<dbReference type="SUPFAM" id="SSF48019">
    <property type="entry name" value="post-AAA+ oligomerization domain-like"/>
    <property type="match status" value="1"/>
</dbReference>
<name>DPO3X_BUCAI</name>
<evidence type="ECO:0000250" key="1"/>
<evidence type="ECO:0000250" key="2">
    <source>
        <dbReference type="UniProtKB" id="P06710"/>
    </source>
</evidence>
<evidence type="ECO:0000255" key="3"/>
<evidence type="ECO:0000305" key="4"/>
<organism>
    <name type="scientific">Buchnera aphidicola subsp. Acyrthosiphon pisum (strain APS)</name>
    <name type="common">Acyrthosiphon pisum symbiotic bacterium</name>
    <dbReference type="NCBI Taxonomy" id="107806"/>
    <lineage>
        <taxon>Bacteria</taxon>
        <taxon>Pseudomonadati</taxon>
        <taxon>Pseudomonadota</taxon>
        <taxon>Gammaproteobacteria</taxon>
        <taxon>Enterobacterales</taxon>
        <taxon>Erwiniaceae</taxon>
        <taxon>Buchnera</taxon>
    </lineage>
</organism>
<keyword id="KW-0067">ATP-binding</keyword>
<keyword id="KW-0235">DNA replication</keyword>
<keyword id="KW-0239">DNA-directed DNA polymerase</keyword>
<keyword id="KW-0479">Metal-binding</keyword>
<keyword id="KW-0547">Nucleotide-binding</keyword>
<keyword id="KW-0548">Nucleotidyltransferase</keyword>
<keyword id="KW-1185">Reference proteome</keyword>
<keyword id="KW-0808">Transferase</keyword>
<keyword id="KW-0862">Zinc</keyword>
<proteinExistence type="inferred from homology"/>
<reference key="1">
    <citation type="journal article" date="2000" name="Nature">
        <title>Genome sequence of the endocellular bacterial symbiont of aphids Buchnera sp. APS.</title>
        <authorList>
            <person name="Shigenobu S."/>
            <person name="Watanabe H."/>
            <person name="Hattori M."/>
            <person name="Sakaki Y."/>
            <person name="Ishikawa H."/>
        </authorList>
    </citation>
    <scope>NUCLEOTIDE SEQUENCE [LARGE SCALE GENOMIC DNA]</scope>
    <source>
        <strain>APS</strain>
    </source>
</reference>
<protein>
    <recommendedName>
        <fullName>DNA polymerase III subunit gamma</fullName>
        <ecNumber>2.7.7.7</ecNumber>
    </recommendedName>
</protein>
<gene>
    <name type="primary">dnaX</name>
    <name type="ordered locus">BU481</name>
</gene>